<keyword id="KW-0067">ATP-binding</keyword>
<keyword id="KW-0963">Cytoplasm</keyword>
<keyword id="KW-0418">Kinase</keyword>
<keyword id="KW-0520">NAD</keyword>
<keyword id="KW-0521">NADP</keyword>
<keyword id="KW-0547">Nucleotide-binding</keyword>
<keyword id="KW-0808">Transferase</keyword>
<dbReference type="EC" id="2.7.1.23" evidence="1"/>
<dbReference type="EMBL" id="CP001025">
    <property type="protein sequence ID" value="ACB63158.1"/>
    <property type="molecule type" value="Genomic_DNA"/>
</dbReference>
<dbReference type="RefSeq" id="WP_006752731.1">
    <property type="nucleotide sequence ID" value="NC_010551.1"/>
</dbReference>
<dbReference type="SMR" id="B1YTJ3"/>
<dbReference type="KEGG" id="bac:BamMC406_0662"/>
<dbReference type="HOGENOM" id="CLU_008831_0_1_4"/>
<dbReference type="OrthoDB" id="9774737at2"/>
<dbReference type="Proteomes" id="UP000001680">
    <property type="component" value="Chromosome 1"/>
</dbReference>
<dbReference type="GO" id="GO:0005737">
    <property type="term" value="C:cytoplasm"/>
    <property type="evidence" value="ECO:0007669"/>
    <property type="project" value="UniProtKB-SubCell"/>
</dbReference>
<dbReference type="GO" id="GO:0005524">
    <property type="term" value="F:ATP binding"/>
    <property type="evidence" value="ECO:0007669"/>
    <property type="project" value="UniProtKB-KW"/>
</dbReference>
<dbReference type="GO" id="GO:0046872">
    <property type="term" value="F:metal ion binding"/>
    <property type="evidence" value="ECO:0007669"/>
    <property type="project" value="UniProtKB-UniRule"/>
</dbReference>
<dbReference type="GO" id="GO:0051287">
    <property type="term" value="F:NAD binding"/>
    <property type="evidence" value="ECO:0007669"/>
    <property type="project" value="UniProtKB-ARBA"/>
</dbReference>
<dbReference type="GO" id="GO:0003951">
    <property type="term" value="F:NAD+ kinase activity"/>
    <property type="evidence" value="ECO:0007669"/>
    <property type="project" value="UniProtKB-UniRule"/>
</dbReference>
<dbReference type="GO" id="GO:0019674">
    <property type="term" value="P:NAD metabolic process"/>
    <property type="evidence" value="ECO:0007669"/>
    <property type="project" value="InterPro"/>
</dbReference>
<dbReference type="GO" id="GO:0006741">
    <property type="term" value="P:NADP biosynthetic process"/>
    <property type="evidence" value="ECO:0007669"/>
    <property type="project" value="UniProtKB-UniRule"/>
</dbReference>
<dbReference type="Gene3D" id="3.40.50.10330">
    <property type="entry name" value="Probable inorganic polyphosphate/atp-NAD kinase, domain 1"/>
    <property type="match status" value="1"/>
</dbReference>
<dbReference type="Gene3D" id="2.60.200.30">
    <property type="entry name" value="Probable inorganic polyphosphate/atp-NAD kinase, domain 2"/>
    <property type="match status" value="1"/>
</dbReference>
<dbReference type="HAMAP" id="MF_00361">
    <property type="entry name" value="NAD_kinase"/>
    <property type="match status" value="1"/>
</dbReference>
<dbReference type="InterPro" id="IPR017438">
    <property type="entry name" value="ATP-NAD_kinase_N"/>
</dbReference>
<dbReference type="InterPro" id="IPR017437">
    <property type="entry name" value="ATP-NAD_kinase_PpnK-typ_C"/>
</dbReference>
<dbReference type="InterPro" id="IPR016064">
    <property type="entry name" value="NAD/diacylglycerol_kinase_sf"/>
</dbReference>
<dbReference type="InterPro" id="IPR002504">
    <property type="entry name" value="NADK"/>
</dbReference>
<dbReference type="NCBIfam" id="NF002561">
    <property type="entry name" value="PRK02155.1"/>
    <property type="match status" value="1"/>
</dbReference>
<dbReference type="PANTHER" id="PTHR20275">
    <property type="entry name" value="NAD KINASE"/>
    <property type="match status" value="1"/>
</dbReference>
<dbReference type="PANTHER" id="PTHR20275:SF0">
    <property type="entry name" value="NAD KINASE"/>
    <property type="match status" value="1"/>
</dbReference>
<dbReference type="Pfam" id="PF01513">
    <property type="entry name" value="NAD_kinase"/>
    <property type="match status" value="1"/>
</dbReference>
<dbReference type="Pfam" id="PF20143">
    <property type="entry name" value="NAD_kinase_C"/>
    <property type="match status" value="1"/>
</dbReference>
<dbReference type="SUPFAM" id="SSF111331">
    <property type="entry name" value="NAD kinase/diacylglycerol kinase-like"/>
    <property type="match status" value="1"/>
</dbReference>
<gene>
    <name evidence="1" type="primary">nadK</name>
    <name type="ordered locus">BamMC406_0662</name>
</gene>
<feature type="chain" id="PRO_1000120832" description="NAD kinase">
    <location>
        <begin position="1"/>
        <end position="300"/>
    </location>
</feature>
<feature type="active site" description="Proton acceptor" evidence="1">
    <location>
        <position position="75"/>
    </location>
</feature>
<feature type="binding site" evidence="1">
    <location>
        <begin position="75"/>
        <end position="76"/>
    </location>
    <ligand>
        <name>NAD(+)</name>
        <dbReference type="ChEBI" id="CHEBI:57540"/>
    </ligand>
</feature>
<feature type="binding site" evidence="1">
    <location>
        <begin position="149"/>
        <end position="150"/>
    </location>
    <ligand>
        <name>NAD(+)</name>
        <dbReference type="ChEBI" id="CHEBI:57540"/>
    </ligand>
</feature>
<feature type="binding site" evidence="1">
    <location>
        <position position="177"/>
    </location>
    <ligand>
        <name>NAD(+)</name>
        <dbReference type="ChEBI" id="CHEBI:57540"/>
    </ligand>
</feature>
<feature type="binding site" evidence="1">
    <location>
        <position position="179"/>
    </location>
    <ligand>
        <name>NAD(+)</name>
        <dbReference type="ChEBI" id="CHEBI:57540"/>
    </ligand>
</feature>
<feature type="binding site" evidence="1">
    <location>
        <begin position="190"/>
        <end position="195"/>
    </location>
    <ligand>
        <name>NAD(+)</name>
        <dbReference type="ChEBI" id="CHEBI:57540"/>
    </ligand>
</feature>
<feature type="binding site" evidence="1">
    <location>
        <position position="214"/>
    </location>
    <ligand>
        <name>NAD(+)</name>
        <dbReference type="ChEBI" id="CHEBI:57540"/>
    </ligand>
</feature>
<feature type="binding site" evidence="1">
    <location>
        <position position="248"/>
    </location>
    <ligand>
        <name>NAD(+)</name>
        <dbReference type="ChEBI" id="CHEBI:57540"/>
    </ligand>
</feature>
<sequence length="300" mass="32286">MKTGNQFNTVALVGRSNTPGIAEPLTTLAGCIAKLGFEVVFEVDTAREIGISGYPALTPAEIGARADVAVVLGGDGTMLGIGRQLAPYKTPLIGINHGRLGFITDIAAADMQARVPVILSGKFEREERSLLEARIVRDGEPIYHALAFNDVVVNRSGFSGMVELRASVDGRFMYNQRSDGLIVATPTGSTAYALSSAGPILHPQLQGIVLVPIAPHALSNRPIVLPDDSKIAIQIVGGRDVNVNFDMQSFTALELNDTIEVRRSKHTVPFLHPVGYSYYATLRKKLHWNEHASNEDDTAS</sequence>
<accession>B1YTJ3</accession>
<reference key="1">
    <citation type="submission" date="2008-04" db="EMBL/GenBank/DDBJ databases">
        <title>Complete sequence of chromosome 1 of Burkholderia ambifaria MC40-6.</title>
        <authorList>
            <person name="Copeland A."/>
            <person name="Lucas S."/>
            <person name="Lapidus A."/>
            <person name="Glavina del Rio T."/>
            <person name="Dalin E."/>
            <person name="Tice H."/>
            <person name="Pitluck S."/>
            <person name="Chain P."/>
            <person name="Malfatti S."/>
            <person name="Shin M."/>
            <person name="Vergez L."/>
            <person name="Lang D."/>
            <person name="Schmutz J."/>
            <person name="Larimer F."/>
            <person name="Land M."/>
            <person name="Hauser L."/>
            <person name="Kyrpides N."/>
            <person name="Lykidis A."/>
            <person name="Ramette A."/>
            <person name="Konstantinidis K."/>
            <person name="Tiedje J."/>
            <person name="Richardson P."/>
        </authorList>
    </citation>
    <scope>NUCLEOTIDE SEQUENCE [LARGE SCALE GENOMIC DNA]</scope>
    <source>
        <strain>MC40-6</strain>
    </source>
</reference>
<protein>
    <recommendedName>
        <fullName evidence="1">NAD kinase</fullName>
        <ecNumber evidence="1">2.7.1.23</ecNumber>
    </recommendedName>
    <alternativeName>
        <fullName evidence="1">ATP-dependent NAD kinase</fullName>
    </alternativeName>
</protein>
<organism>
    <name type="scientific">Burkholderia ambifaria (strain MC40-6)</name>
    <dbReference type="NCBI Taxonomy" id="398577"/>
    <lineage>
        <taxon>Bacteria</taxon>
        <taxon>Pseudomonadati</taxon>
        <taxon>Pseudomonadota</taxon>
        <taxon>Betaproteobacteria</taxon>
        <taxon>Burkholderiales</taxon>
        <taxon>Burkholderiaceae</taxon>
        <taxon>Burkholderia</taxon>
        <taxon>Burkholderia cepacia complex</taxon>
    </lineage>
</organism>
<evidence type="ECO:0000255" key="1">
    <source>
        <dbReference type="HAMAP-Rule" id="MF_00361"/>
    </source>
</evidence>
<proteinExistence type="inferred from homology"/>
<comment type="function">
    <text evidence="1">Involved in the regulation of the intracellular balance of NAD and NADP, and is a key enzyme in the biosynthesis of NADP. Catalyzes specifically the phosphorylation on 2'-hydroxyl of the adenosine moiety of NAD to yield NADP.</text>
</comment>
<comment type="catalytic activity">
    <reaction evidence="1">
        <text>NAD(+) + ATP = ADP + NADP(+) + H(+)</text>
        <dbReference type="Rhea" id="RHEA:18629"/>
        <dbReference type="ChEBI" id="CHEBI:15378"/>
        <dbReference type="ChEBI" id="CHEBI:30616"/>
        <dbReference type="ChEBI" id="CHEBI:57540"/>
        <dbReference type="ChEBI" id="CHEBI:58349"/>
        <dbReference type="ChEBI" id="CHEBI:456216"/>
        <dbReference type="EC" id="2.7.1.23"/>
    </reaction>
</comment>
<comment type="cofactor">
    <cofactor evidence="1">
        <name>a divalent metal cation</name>
        <dbReference type="ChEBI" id="CHEBI:60240"/>
    </cofactor>
</comment>
<comment type="subcellular location">
    <subcellularLocation>
        <location evidence="1">Cytoplasm</location>
    </subcellularLocation>
</comment>
<comment type="similarity">
    <text evidence="1">Belongs to the NAD kinase family.</text>
</comment>
<name>NADK_BURA4</name>